<name>RAS3_MUCCL</name>
<organism>
    <name type="scientific">Mucor circinelloides f. lusitanicus</name>
    <name type="common">Mucor racemosus var. lusitanicus</name>
    <dbReference type="NCBI Taxonomy" id="29924"/>
    <lineage>
        <taxon>Eukaryota</taxon>
        <taxon>Fungi</taxon>
        <taxon>Fungi incertae sedis</taxon>
        <taxon>Mucoromycota</taxon>
        <taxon>Mucoromycotina</taxon>
        <taxon>Mucoromycetes</taxon>
        <taxon>Mucorales</taxon>
        <taxon>Mucorineae</taxon>
        <taxon>Mucoraceae</taxon>
        <taxon>Mucor</taxon>
    </lineage>
</organism>
<reference key="1">
    <citation type="journal article" date="1990" name="Mol. Cell. Biol.">
        <title>Expression of a gene family in the dimorphic fungus Mucor racemosus which exhibits striking similarity to human ras genes.</title>
        <authorList>
            <person name="Casale W.L."/>
            <person name="McConnell D.G."/>
            <person name="Wang S.-Y."/>
            <person name="Lee Y.-J."/>
            <person name="Linz J.E."/>
        </authorList>
    </citation>
    <scope>NUCLEOTIDE SEQUENCE [GENOMIC DNA]</scope>
    <source>
        <strain>ATCC 1216b / BCRC 32522 / CBS 277.49 / NRRL 3631</strain>
    </source>
</reference>
<feature type="chain" id="PRO_0000082681" description="Ras-like protein 3">
    <location>
        <begin position="1"/>
        <end position="202"/>
    </location>
</feature>
<feature type="propeptide" id="PRO_0000281324" description="Removed in mature form" evidence="1">
    <location>
        <begin position="203"/>
        <end position="205"/>
    </location>
</feature>
<feature type="short sequence motif" description="Effector region" evidence="3">
    <location>
        <begin position="38"/>
        <end position="46"/>
    </location>
</feature>
<feature type="binding site" evidence="1">
    <location>
        <begin position="16"/>
        <end position="23"/>
    </location>
    <ligand>
        <name>GTP</name>
        <dbReference type="ChEBI" id="CHEBI:37565"/>
    </ligand>
</feature>
<feature type="binding site" evidence="1">
    <location>
        <begin position="63"/>
        <end position="67"/>
    </location>
    <ligand>
        <name>GTP</name>
        <dbReference type="ChEBI" id="CHEBI:37565"/>
    </ligand>
</feature>
<feature type="binding site" evidence="1">
    <location>
        <begin position="122"/>
        <end position="125"/>
    </location>
    <ligand>
        <name>GTP</name>
        <dbReference type="ChEBI" id="CHEBI:37565"/>
    </ligand>
</feature>
<feature type="modified residue" description="Cysteine methyl ester" evidence="1">
    <location>
        <position position="202"/>
    </location>
</feature>
<feature type="lipid moiety-binding region" description="S-farnesyl cysteine" evidence="1">
    <location>
        <position position="202"/>
    </location>
</feature>
<proteinExistence type="evidence at transcript level"/>
<keyword id="KW-1003">Cell membrane</keyword>
<keyword id="KW-0342">GTP-binding</keyword>
<keyword id="KW-0378">Hydrolase</keyword>
<keyword id="KW-0449">Lipoprotein</keyword>
<keyword id="KW-0472">Membrane</keyword>
<keyword id="KW-0488">Methylation</keyword>
<keyword id="KW-0547">Nucleotide-binding</keyword>
<keyword id="KW-0636">Prenylation</keyword>
<sequence>MSKASFLREYKIVIVGGGGVGKSALTIQFIQSHFVDEYDPTIEDSYRKQCVIDDETALLDVLDTAGQEEYSAMREQYMRNGEGFVLVYSITSRLSFEEVNTFYQQIRRVKDRDSFPMVLVGNKCDLEGDRQVSSQEGRDLAKSFGCPFSETSAKQRIRVDDTFYEVVREIRRMNKEQEGRSKGGQREAFEMSDTRNDGCCGCILM</sequence>
<dbReference type="EC" id="3.6.5.2" evidence="2"/>
<dbReference type="EMBL" id="M55177">
    <property type="protein sequence ID" value="AAA83379.1"/>
    <property type="molecule type" value="Genomic_DNA"/>
</dbReference>
<dbReference type="PIR" id="C36365">
    <property type="entry name" value="C36365"/>
</dbReference>
<dbReference type="SMR" id="P22280"/>
<dbReference type="GO" id="GO:0005886">
    <property type="term" value="C:plasma membrane"/>
    <property type="evidence" value="ECO:0007669"/>
    <property type="project" value="UniProtKB-SubCell"/>
</dbReference>
<dbReference type="GO" id="GO:0003925">
    <property type="term" value="F:G protein activity"/>
    <property type="evidence" value="ECO:0007669"/>
    <property type="project" value="UniProtKB-EC"/>
</dbReference>
<dbReference type="GO" id="GO:0005525">
    <property type="term" value="F:GTP binding"/>
    <property type="evidence" value="ECO:0007669"/>
    <property type="project" value="UniProtKB-KW"/>
</dbReference>
<dbReference type="GO" id="GO:0007165">
    <property type="term" value="P:signal transduction"/>
    <property type="evidence" value="ECO:0007669"/>
    <property type="project" value="InterPro"/>
</dbReference>
<dbReference type="FunFam" id="3.40.50.300:FF:000080">
    <property type="entry name" value="Ras-like GTPase Ras1"/>
    <property type="match status" value="1"/>
</dbReference>
<dbReference type="Gene3D" id="3.40.50.300">
    <property type="entry name" value="P-loop containing nucleotide triphosphate hydrolases"/>
    <property type="match status" value="1"/>
</dbReference>
<dbReference type="InterPro" id="IPR027417">
    <property type="entry name" value="P-loop_NTPase"/>
</dbReference>
<dbReference type="InterPro" id="IPR005225">
    <property type="entry name" value="Small_GTP-bd"/>
</dbReference>
<dbReference type="InterPro" id="IPR001806">
    <property type="entry name" value="Small_GTPase"/>
</dbReference>
<dbReference type="InterPro" id="IPR020849">
    <property type="entry name" value="Small_GTPase_Ras-type"/>
</dbReference>
<dbReference type="NCBIfam" id="TIGR00231">
    <property type="entry name" value="small_GTP"/>
    <property type="match status" value="1"/>
</dbReference>
<dbReference type="PANTHER" id="PTHR24070">
    <property type="entry name" value="RAS, DI-RAS, AND RHEB FAMILY MEMBERS OF SMALL GTPASE SUPERFAMILY"/>
    <property type="match status" value="1"/>
</dbReference>
<dbReference type="Pfam" id="PF00071">
    <property type="entry name" value="Ras"/>
    <property type="match status" value="1"/>
</dbReference>
<dbReference type="PRINTS" id="PR00449">
    <property type="entry name" value="RASTRNSFRMNG"/>
</dbReference>
<dbReference type="SMART" id="SM00175">
    <property type="entry name" value="RAB"/>
    <property type="match status" value="1"/>
</dbReference>
<dbReference type="SMART" id="SM00173">
    <property type="entry name" value="RAS"/>
    <property type="match status" value="1"/>
</dbReference>
<dbReference type="SMART" id="SM00174">
    <property type="entry name" value="RHO"/>
    <property type="match status" value="1"/>
</dbReference>
<dbReference type="SUPFAM" id="SSF52540">
    <property type="entry name" value="P-loop containing nucleoside triphosphate hydrolases"/>
    <property type="match status" value="1"/>
</dbReference>
<dbReference type="PROSITE" id="PS51421">
    <property type="entry name" value="RAS"/>
    <property type="match status" value="1"/>
</dbReference>
<accession>P22280</accession>
<comment type="catalytic activity">
    <reaction evidence="2">
        <text>GTP + H2O = GDP + phosphate + H(+)</text>
        <dbReference type="Rhea" id="RHEA:19669"/>
        <dbReference type="ChEBI" id="CHEBI:15377"/>
        <dbReference type="ChEBI" id="CHEBI:15378"/>
        <dbReference type="ChEBI" id="CHEBI:37565"/>
        <dbReference type="ChEBI" id="CHEBI:43474"/>
        <dbReference type="ChEBI" id="CHEBI:58189"/>
        <dbReference type="EC" id="3.6.5.2"/>
    </reaction>
</comment>
<comment type="activity regulation">
    <text>Alternates between an inactive form bound to GDP and an active form bound to GTP. Activated by a guanine nucleotide-exchange factor (GEF) and inactivated by a GTPase-activating protein (GAP).</text>
</comment>
<comment type="subcellular location">
    <subcellularLocation>
        <location>Cell membrane</location>
        <topology>Lipid-anchor</topology>
    </subcellularLocation>
</comment>
<comment type="developmental stage">
    <text>In sporulating mycelium and much less in germling and yeast.</text>
</comment>
<comment type="similarity">
    <text evidence="3">Belongs to the small GTPase superfamily. Ras family.</text>
</comment>
<protein>
    <recommendedName>
        <fullName>Ras-like protein 3</fullName>
        <ecNumber evidence="2">3.6.5.2</ecNumber>
    </recommendedName>
</protein>
<gene>
    <name type="primary">RAS3</name>
</gene>
<evidence type="ECO:0000250" key="1"/>
<evidence type="ECO:0000250" key="2">
    <source>
        <dbReference type="UniProtKB" id="P01112"/>
    </source>
</evidence>
<evidence type="ECO:0000305" key="3"/>